<evidence type="ECO:0000255" key="1">
    <source>
        <dbReference type="HAMAP-Rule" id="MF_00537"/>
    </source>
</evidence>
<evidence type="ECO:0000305" key="2"/>
<name>RS14_SYNY3</name>
<dbReference type="EMBL" id="BA000022">
    <property type="protein sequence ID" value="BAA10344.1"/>
    <property type="molecule type" value="Genomic_DNA"/>
</dbReference>
<dbReference type="PIR" id="S76498">
    <property type="entry name" value="S76498"/>
</dbReference>
<dbReference type="SMR" id="P48944"/>
<dbReference type="FunCoup" id="P48944">
    <property type="interactions" value="312"/>
</dbReference>
<dbReference type="STRING" id="1148.gene:10499845"/>
<dbReference type="PaxDb" id="1148-1001613"/>
<dbReference type="EnsemblBacteria" id="BAA10344">
    <property type="protein sequence ID" value="BAA10344"/>
    <property type="gene ID" value="BAA10344"/>
</dbReference>
<dbReference type="KEGG" id="syn:slr0628"/>
<dbReference type="eggNOG" id="COG0199">
    <property type="taxonomic scope" value="Bacteria"/>
</dbReference>
<dbReference type="InParanoid" id="P48944"/>
<dbReference type="PhylomeDB" id="P48944"/>
<dbReference type="Proteomes" id="UP000001425">
    <property type="component" value="Chromosome"/>
</dbReference>
<dbReference type="GO" id="GO:0005737">
    <property type="term" value="C:cytoplasm"/>
    <property type="evidence" value="ECO:0007669"/>
    <property type="project" value="UniProtKB-ARBA"/>
</dbReference>
<dbReference type="GO" id="GO:0015935">
    <property type="term" value="C:small ribosomal subunit"/>
    <property type="evidence" value="ECO:0000318"/>
    <property type="project" value="GO_Central"/>
</dbReference>
<dbReference type="GO" id="GO:0019843">
    <property type="term" value="F:rRNA binding"/>
    <property type="evidence" value="ECO:0007669"/>
    <property type="project" value="UniProtKB-UniRule"/>
</dbReference>
<dbReference type="GO" id="GO:0003735">
    <property type="term" value="F:structural constituent of ribosome"/>
    <property type="evidence" value="ECO:0000318"/>
    <property type="project" value="GO_Central"/>
</dbReference>
<dbReference type="GO" id="GO:0006412">
    <property type="term" value="P:translation"/>
    <property type="evidence" value="ECO:0000318"/>
    <property type="project" value="GO_Central"/>
</dbReference>
<dbReference type="FunFam" id="1.10.287.1480:FF:000001">
    <property type="entry name" value="30S ribosomal protein S14"/>
    <property type="match status" value="1"/>
</dbReference>
<dbReference type="Gene3D" id="1.10.287.1480">
    <property type="match status" value="1"/>
</dbReference>
<dbReference type="HAMAP" id="MF_00537">
    <property type="entry name" value="Ribosomal_uS14_1"/>
    <property type="match status" value="1"/>
</dbReference>
<dbReference type="InterPro" id="IPR001209">
    <property type="entry name" value="Ribosomal_uS14"/>
</dbReference>
<dbReference type="InterPro" id="IPR023036">
    <property type="entry name" value="Ribosomal_uS14_bac/plastid"/>
</dbReference>
<dbReference type="InterPro" id="IPR018271">
    <property type="entry name" value="Ribosomal_uS14_CS"/>
</dbReference>
<dbReference type="NCBIfam" id="NF006477">
    <property type="entry name" value="PRK08881.1"/>
    <property type="match status" value="1"/>
</dbReference>
<dbReference type="PANTHER" id="PTHR19836">
    <property type="entry name" value="30S RIBOSOMAL PROTEIN S14"/>
    <property type="match status" value="1"/>
</dbReference>
<dbReference type="PANTHER" id="PTHR19836:SF19">
    <property type="entry name" value="SMALL RIBOSOMAL SUBUNIT PROTEIN US14M"/>
    <property type="match status" value="1"/>
</dbReference>
<dbReference type="Pfam" id="PF00253">
    <property type="entry name" value="Ribosomal_S14"/>
    <property type="match status" value="1"/>
</dbReference>
<dbReference type="SUPFAM" id="SSF57716">
    <property type="entry name" value="Glucocorticoid receptor-like (DNA-binding domain)"/>
    <property type="match status" value="1"/>
</dbReference>
<dbReference type="PROSITE" id="PS00527">
    <property type="entry name" value="RIBOSOMAL_S14"/>
    <property type="match status" value="1"/>
</dbReference>
<reference key="1">
    <citation type="journal article" date="1995" name="DNA Res.">
        <title>Sequence analysis of the genome of the unicellular cyanobacterium Synechocystis sp. strain PCC6803. I. Sequence features in the 1 Mb region from map positions 64% to 92% of the genome.</title>
        <authorList>
            <person name="Kaneko T."/>
            <person name="Tanaka A."/>
            <person name="Sato S."/>
            <person name="Kotani H."/>
            <person name="Sazuka T."/>
            <person name="Miyajima N."/>
            <person name="Sugiura M."/>
            <person name="Tabata S."/>
        </authorList>
    </citation>
    <scope>NUCLEOTIDE SEQUENCE [LARGE SCALE GENOMIC DNA]</scope>
    <source>
        <strain>ATCC 27184 / PCC 6803 / N-1</strain>
    </source>
</reference>
<reference key="2">
    <citation type="journal article" date="1996" name="DNA Res.">
        <title>Sequence analysis of the genome of the unicellular cyanobacterium Synechocystis sp. strain PCC6803. II. Sequence determination of the entire genome and assignment of potential protein-coding regions.</title>
        <authorList>
            <person name="Kaneko T."/>
            <person name="Sato S."/>
            <person name="Kotani H."/>
            <person name="Tanaka A."/>
            <person name="Asamizu E."/>
            <person name="Nakamura Y."/>
            <person name="Miyajima N."/>
            <person name="Hirosawa M."/>
            <person name="Sugiura M."/>
            <person name="Sasamoto S."/>
            <person name="Kimura T."/>
            <person name="Hosouchi T."/>
            <person name="Matsuno A."/>
            <person name="Muraki A."/>
            <person name="Nakazaki N."/>
            <person name="Naruo K."/>
            <person name="Okumura S."/>
            <person name="Shimpo S."/>
            <person name="Takeuchi C."/>
            <person name="Wada T."/>
            <person name="Watanabe A."/>
            <person name="Yamada M."/>
            <person name="Yasuda M."/>
            <person name="Tabata S."/>
        </authorList>
    </citation>
    <scope>NUCLEOTIDE SEQUENCE [LARGE SCALE GENOMIC DNA]</scope>
    <source>
        <strain>ATCC 27184 / PCC 6803 / Kazusa</strain>
    </source>
</reference>
<organism>
    <name type="scientific">Synechocystis sp. (strain ATCC 27184 / PCC 6803 / Kazusa)</name>
    <dbReference type="NCBI Taxonomy" id="1111708"/>
    <lineage>
        <taxon>Bacteria</taxon>
        <taxon>Bacillati</taxon>
        <taxon>Cyanobacteriota</taxon>
        <taxon>Cyanophyceae</taxon>
        <taxon>Synechococcales</taxon>
        <taxon>Merismopediaceae</taxon>
        <taxon>Synechocystis</taxon>
    </lineage>
</organism>
<proteinExistence type="inferred from homology"/>
<keyword id="KW-1185">Reference proteome</keyword>
<keyword id="KW-0687">Ribonucleoprotein</keyword>
<keyword id="KW-0689">Ribosomal protein</keyword>
<keyword id="KW-0694">RNA-binding</keyword>
<keyword id="KW-0699">rRNA-binding</keyword>
<sequence length="100" mass="11854">MAKKSMIERDKRRSRLVAKYAAKREALKEEFRQAETLEDKLAVHQKLQDLPRNSAPNRRRNRCQVTGRPRSYYRDFGLCRNVLREWAHQGLLPGVTKSSW</sequence>
<protein>
    <recommendedName>
        <fullName evidence="1">Small ribosomal subunit protein uS14</fullName>
    </recommendedName>
    <alternativeName>
        <fullName evidence="2">30S ribosomal protein S14</fullName>
    </alternativeName>
</protein>
<gene>
    <name evidence="1" type="primary">rpsN</name>
    <name evidence="1" type="synonym">rps14</name>
    <name type="ordered locus">slr0628</name>
</gene>
<feature type="chain" id="PRO_0000130952" description="Small ribosomal subunit protein uS14">
    <location>
        <begin position="1"/>
        <end position="100"/>
    </location>
</feature>
<comment type="function">
    <text evidence="1">Binds 16S rRNA, required for the assembly of 30S particles and may also be responsible for determining the conformation of the 16S rRNA at the A site.</text>
</comment>
<comment type="subunit">
    <text evidence="1">Part of the 30S ribosomal subunit. Contacts proteins S3 and S10.</text>
</comment>
<comment type="similarity">
    <text evidence="1">Belongs to the universal ribosomal protein uS14 family.</text>
</comment>
<accession>P48944</accession>